<organism>
    <name type="scientific">Pseudoalteromonas atlantica (strain T6c / ATCC BAA-1087)</name>
    <dbReference type="NCBI Taxonomy" id="3042615"/>
    <lineage>
        <taxon>Bacteria</taxon>
        <taxon>Pseudomonadati</taxon>
        <taxon>Pseudomonadota</taxon>
        <taxon>Gammaproteobacteria</taxon>
        <taxon>Alteromonadales</taxon>
        <taxon>Alteromonadaceae</taxon>
        <taxon>Paraglaciecola</taxon>
    </lineage>
</organism>
<accession>Q15XV2</accession>
<gene>
    <name evidence="1" type="primary">aceK</name>
    <name type="ordered locus">Patl_0758</name>
</gene>
<proteinExistence type="inferred from homology"/>
<reference key="1">
    <citation type="submission" date="2006-06" db="EMBL/GenBank/DDBJ databases">
        <title>Complete sequence of Pseudoalteromonas atlantica T6c.</title>
        <authorList>
            <consortium name="US DOE Joint Genome Institute"/>
            <person name="Copeland A."/>
            <person name="Lucas S."/>
            <person name="Lapidus A."/>
            <person name="Barry K."/>
            <person name="Detter J.C."/>
            <person name="Glavina del Rio T."/>
            <person name="Hammon N."/>
            <person name="Israni S."/>
            <person name="Dalin E."/>
            <person name="Tice H."/>
            <person name="Pitluck S."/>
            <person name="Saunders E."/>
            <person name="Brettin T."/>
            <person name="Bruce D."/>
            <person name="Han C."/>
            <person name="Tapia R."/>
            <person name="Gilna P."/>
            <person name="Schmutz J."/>
            <person name="Larimer F."/>
            <person name="Land M."/>
            <person name="Hauser L."/>
            <person name="Kyrpides N."/>
            <person name="Kim E."/>
            <person name="Karls A.C."/>
            <person name="Bartlett D."/>
            <person name="Higgins B.P."/>
            <person name="Richardson P."/>
        </authorList>
    </citation>
    <scope>NUCLEOTIDE SEQUENCE [LARGE SCALE GENOMIC DNA]</scope>
    <source>
        <strain>T6c / ATCC BAA-1087</strain>
    </source>
</reference>
<feature type="chain" id="PRO_0000288292" description="Isocitrate dehydrogenase kinase/phosphatase">
    <location>
        <begin position="1"/>
        <end position="577"/>
    </location>
</feature>
<feature type="active site" evidence="1">
    <location>
        <position position="380"/>
    </location>
</feature>
<feature type="binding site" evidence="1">
    <location>
        <begin position="324"/>
        <end position="330"/>
    </location>
    <ligand>
        <name>ATP</name>
        <dbReference type="ChEBI" id="CHEBI:30616"/>
    </ligand>
</feature>
<feature type="binding site" evidence="1">
    <location>
        <position position="345"/>
    </location>
    <ligand>
        <name>ATP</name>
        <dbReference type="ChEBI" id="CHEBI:30616"/>
    </ligand>
</feature>
<dbReference type="EC" id="2.7.11.5" evidence="1"/>
<dbReference type="EC" id="3.1.3.-" evidence="1"/>
<dbReference type="EMBL" id="CP000388">
    <property type="protein sequence ID" value="ABG39286.1"/>
    <property type="molecule type" value="Genomic_DNA"/>
</dbReference>
<dbReference type="RefSeq" id="WP_011573647.1">
    <property type="nucleotide sequence ID" value="NC_008228.1"/>
</dbReference>
<dbReference type="SMR" id="Q15XV2"/>
<dbReference type="STRING" id="342610.Patl_0758"/>
<dbReference type="KEGG" id="pat:Patl_0758"/>
<dbReference type="eggNOG" id="COG4579">
    <property type="taxonomic scope" value="Bacteria"/>
</dbReference>
<dbReference type="HOGENOM" id="CLU_033804_1_1_6"/>
<dbReference type="OrthoDB" id="5287793at2"/>
<dbReference type="Proteomes" id="UP000001981">
    <property type="component" value="Chromosome"/>
</dbReference>
<dbReference type="GO" id="GO:0005737">
    <property type="term" value="C:cytoplasm"/>
    <property type="evidence" value="ECO:0007669"/>
    <property type="project" value="UniProtKB-SubCell"/>
</dbReference>
<dbReference type="GO" id="GO:0008772">
    <property type="term" value="F:[isocitrate dehydrogenase (NADP+)] kinase activity"/>
    <property type="evidence" value="ECO:0007669"/>
    <property type="project" value="UniProtKB-UniRule"/>
</dbReference>
<dbReference type="GO" id="GO:0016208">
    <property type="term" value="F:AMP binding"/>
    <property type="evidence" value="ECO:0007669"/>
    <property type="project" value="TreeGrafter"/>
</dbReference>
<dbReference type="GO" id="GO:0005524">
    <property type="term" value="F:ATP binding"/>
    <property type="evidence" value="ECO:0007669"/>
    <property type="project" value="UniProtKB-UniRule"/>
</dbReference>
<dbReference type="GO" id="GO:0004721">
    <property type="term" value="F:phosphoprotein phosphatase activity"/>
    <property type="evidence" value="ECO:0007669"/>
    <property type="project" value="UniProtKB-KW"/>
</dbReference>
<dbReference type="GO" id="GO:0004674">
    <property type="term" value="F:protein serine/threonine kinase activity"/>
    <property type="evidence" value="ECO:0007669"/>
    <property type="project" value="UniProtKB-KW"/>
</dbReference>
<dbReference type="GO" id="GO:0006006">
    <property type="term" value="P:glucose metabolic process"/>
    <property type="evidence" value="ECO:0007669"/>
    <property type="project" value="InterPro"/>
</dbReference>
<dbReference type="GO" id="GO:0006097">
    <property type="term" value="P:glyoxylate cycle"/>
    <property type="evidence" value="ECO:0007669"/>
    <property type="project" value="UniProtKB-UniRule"/>
</dbReference>
<dbReference type="GO" id="GO:0006099">
    <property type="term" value="P:tricarboxylic acid cycle"/>
    <property type="evidence" value="ECO:0007669"/>
    <property type="project" value="UniProtKB-UniRule"/>
</dbReference>
<dbReference type="HAMAP" id="MF_00747">
    <property type="entry name" value="AceK"/>
    <property type="match status" value="1"/>
</dbReference>
<dbReference type="InterPro" id="IPR046855">
    <property type="entry name" value="AceK_kinase"/>
</dbReference>
<dbReference type="InterPro" id="IPR046854">
    <property type="entry name" value="AceK_regulatory"/>
</dbReference>
<dbReference type="InterPro" id="IPR010452">
    <property type="entry name" value="Isocitrate_DH_AceK"/>
</dbReference>
<dbReference type="NCBIfam" id="NF002804">
    <property type="entry name" value="PRK02946.1"/>
    <property type="match status" value="1"/>
</dbReference>
<dbReference type="PANTHER" id="PTHR39559">
    <property type="match status" value="1"/>
</dbReference>
<dbReference type="PANTHER" id="PTHR39559:SF1">
    <property type="entry name" value="ISOCITRATE DEHYDROGENASE KINASE_PHOSPHATASE"/>
    <property type="match status" value="1"/>
</dbReference>
<dbReference type="Pfam" id="PF06315">
    <property type="entry name" value="AceK_kinase"/>
    <property type="match status" value="1"/>
</dbReference>
<dbReference type="Pfam" id="PF20423">
    <property type="entry name" value="AceK_regulatory"/>
    <property type="match status" value="1"/>
</dbReference>
<dbReference type="PIRSF" id="PIRSF000719">
    <property type="entry name" value="AceK"/>
    <property type="match status" value="1"/>
</dbReference>
<evidence type="ECO:0000255" key="1">
    <source>
        <dbReference type="HAMAP-Rule" id="MF_00747"/>
    </source>
</evidence>
<name>ACEK_PSEA6</name>
<sequence length="577" mass="67321">MNNTHSSVLNKVAYLILHGFDKSYRWHSRITRDAQQRFEQALWQETQKAVKERIAIYERTLADAVGEIYQQVFPHQENNQFWFDLKTRYQKILSDHPQYELAETFYNSVLGRIFKHQKINDEMMFIMPTRCYLAGLQRHLVVHSFDTSGTVRRMLEDIFSQYHFDIAFQDMQRDLQHLDGALRARLNREQLASVHTVEMLKPVFYRSKSAYLIGRICMPDETLPFVIPLSIAEAETSGEKHKIVVEALLTERQDLSVVFSFARAYFMADTQHPAEVVAFLHELLPHKKKFELYIALGLYKHGKTVFYRNFLAHLEESNDQFSIAPGIRGLVMAVFHLPSYGVVFKIIKDEFPESKKITRQHVKDCYKLVKMTDRVGRMADTHEYVNFRLPRHRVEQALVDELLDCCASSIELTDEEVIIKHLYIERKMTPLNIFLEQQPDPALITSALNDLGLCIKQIAAAHIFAGDMLHKNFGITRGGRVIFYDYDEICYLTEREFRTLPKSDDPYAIDTLSVGPTDVFPEQFEHFIVGKKHLKQELKALHGEIMTAEYWQHMQAQSLKGDVPDFIPYNQAKRFVN</sequence>
<comment type="function">
    <text evidence="1">Bifunctional enzyme which can phosphorylate or dephosphorylate isocitrate dehydrogenase (IDH) on a specific serine residue. This is a regulatory mechanism which enables bacteria to bypass the Krebs cycle via the glyoxylate shunt in response to the source of carbon. When bacteria are grown on glucose, IDH is fully active and unphosphorylated, but when grown on acetate or ethanol, the activity of IDH declines drastically concomitant with its phosphorylation.</text>
</comment>
<comment type="catalytic activity">
    <reaction evidence="1">
        <text>L-seryl-[isocitrate dehydrogenase] + ATP = O-phospho-L-seryl-[isocitrate dehydrogenase] + ADP + H(+)</text>
        <dbReference type="Rhea" id="RHEA:43540"/>
        <dbReference type="Rhea" id="RHEA-COMP:10605"/>
        <dbReference type="Rhea" id="RHEA-COMP:10606"/>
        <dbReference type="ChEBI" id="CHEBI:15378"/>
        <dbReference type="ChEBI" id="CHEBI:29999"/>
        <dbReference type="ChEBI" id="CHEBI:30616"/>
        <dbReference type="ChEBI" id="CHEBI:83421"/>
        <dbReference type="ChEBI" id="CHEBI:456216"/>
        <dbReference type="EC" id="2.7.11.5"/>
    </reaction>
</comment>
<comment type="subcellular location">
    <subcellularLocation>
        <location evidence="1">Cytoplasm</location>
    </subcellularLocation>
</comment>
<comment type="similarity">
    <text evidence="1">Belongs to the AceK family.</text>
</comment>
<keyword id="KW-0067">ATP-binding</keyword>
<keyword id="KW-0963">Cytoplasm</keyword>
<keyword id="KW-0329">Glyoxylate bypass</keyword>
<keyword id="KW-0378">Hydrolase</keyword>
<keyword id="KW-0418">Kinase</keyword>
<keyword id="KW-0547">Nucleotide-binding</keyword>
<keyword id="KW-0904">Protein phosphatase</keyword>
<keyword id="KW-0723">Serine/threonine-protein kinase</keyword>
<keyword id="KW-0808">Transferase</keyword>
<keyword id="KW-0816">Tricarboxylic acid cycle</keyword>
<protein>
    <recommendedName>
        <fullName evidence="1">Isocitrate dehydrogenase kinase/phosphatase</fullName>
        <shortName evidence="1">IDH kinase/phosphatase</shortName>
        <shortName evidence="1">IDHK/P</shortName>
        <ecNumber evidence="1">2.7.11.5</ecNumber>
        <ecNumber evidence="1">3.1.3.-</ecNumber>
    </recommendedName>
</protein>